<evidence type="ECO:0000255" key="1">
    <source>
        <dbReference type="HAMAP-Rule" id="MF_02002"/>
    </source>
</evidence>
<sequence>MKSQNSKEQKSDFSYKETLNLLKTDFSMRANSVLREPEIQNFWANNDIDFQLGSSNSGEIFTLHDGPPYANGALHMGHALNKVLKDIINKYKTLKGFRVHFVPGWDCHGLPIELKVLQNLKSDERKNLDTLNLRKKATDYAHIQINNQKEGFKRWGIWGDWNNPYLTLKKSYESAQIGVFGKMFLNGYIYRGLKPVHWSPSSRTALAEAELEYPDDHYSKSIYVSLKITKIPEEIQLNFIQKNINIKKDFFQNNSFITIWTTTPWTIPANEAVAVNPKINYIFAIDEEKRIYLFAKDLCSEISKKFNKDFKVLLEVKGSKLENIEYQHPSKNKNCRIVIGGDYITTESGTGIVHTAPGHGIDDFNVGQKYDLPITCVVDEKGNLNEYSGQFKGSNVLKDANDLIIEYLKVNNLLLLQENYKHRYPYDWRTKKPTIFRATEQWFASVNGFRSSALKAIEDVEWMPETGKKRIYSMVVGRGDWCISRQRSWGVPIPVFYKKNGNEILLNKEIINHIQELFSEHGADIWWDWDVKNLLPENYAKESDLWKKGKDTMDVWFDSGSSWAAVCELRSELKYPADLYLEGSDQHRGWFQSSLLTSVAVNNKPPYKKVLTHGFALDENGRKMSKSLGNVVDPNIIINGGNNKKTDPAYGADVLRLWVSSVDYSVDVPIGSNILKQLSDVYRKVRNTARYLLGNIHDYDPKIDSFEIDQLPLLDQWMLGRLVEVTDQISNAYENYEFSKFFQILQSFCVVDLSNFYLDIAKDRLYVSSKSQFRRRSCQFVMSKVVENLAVLISPVLCHMAEDIWQNIPYSTKEKSVFQRGWPIFSQSWKNKILNEHISNLRNLRVEINKAIEGCRNKQIIGAALETEVNYLPEDKALKDSLTWLKEFGNQDVDLFRDWLIVSNFQVVSDLVDNSLATDNNALGKIQINKAQGQKCDRCWHYQKETFNGIQNTKLCKRCSNIINFEFI</sequence>
<name>SYI_PROM0</name>
<feature type="chain" id="PRO_1000022097" description="Isoleucine--tRNA ligase">
    <location>
        <begin position="1"/>
        <end position="968"/>
    </location>
</feature>
<feature type="short sequence motif" description="'HIGH' region">
    <location>
        <begin position="68"/>
        <end position="78"/>
    </location>
</feature>
<feature type="short sequence motif" description="'KMSKS' region">
    <location>
        <begin position="623"/>
        <end position="627"/>
    </location>
</feature>
<feature type="binding site" evidence="1">
    <location>
        <position position="582"/>
    </location>
    <ligand>
        <name>L-isoleucyl-5'-AMP</name>
        <dbReference type="ChEBI" id="CHEBI:178002"/>
    </ligand>
</feature>
<feature type="binding site" evidence="1">
    <location>
        <position position="626"/>
    </location>
    <ligand>
        <name>ATP</name>
        <dbReference type="ChEBI" id="CHEBI:30616"/>
    </ligand>
</feature>
<feature type="binding site" evidence="1">
    <location>
        <position position="936"/>
    </location>
    <ligand>
        <name>Zn(2+)</name>
        <dbReference type="ChEBI" id="CHEBI:29105"/>
    </ligand>
</feature>
<feature type="binding site" evidence="1">
    <location>
        <position position="939"/>
    </location>
    <ligand>
        <name>Zn(2+)</name>
        <dbReference type="ChEBI" id="CHEBI:29105"/>
    </ligand>
</feature>
<feature type="binding site" evidence="1">
    <location>
        <position position="956"/>
    </location>
    <ligand>
        <name>Zn(2+)</name>
        <dbReference type="ChEBI" id="CHEBI:29105"/>
    </ligand>
</feature>
<feature type="binding site" evidence="1">
    <location>
        <position position="959"/>
    </location>
    <ligand>
        <name>Zn(2+)</name>
        <dbReference type="ChEBI" id="CHEBI:29105"/>
    </ligand>
</feature>
<protein>
    <recommendedName>
        <fullName evidence="1">Isoleucine--tRNA ligase</fullName>
        <ecNumber evidence="1">6.1.1.5</ecNumber>
    </recommendedName>
    <alternativeName>
        <fullName evidence="1">Isoleucyl-tRNA synthetase</fullName>
        <shortName evidence="1">IleRS</shortName>
    </alternativeName>
</protein>
<accession>A3PAV8</accession>
<keyword id="KW-0030">Aminoacyl-tRNA synthetase</keyword>
<keyword id="KW-0067">ATP-binding</keyword>
<keyword id="KW-0963">Cytoplasm</keyword>
<keyword id="KW-0436">Ligase</keyword>
<keyword id="KW-0479">Metal-binding</keyword>
<keyword id="KW-0547">Nucleotide-binding</keyword>
<keyword id="KW-0648">Protein biosynthesis</keyword>
<keyword id="KW-1185">Reference proteome</keyword>
<keyword id="KW-0862">Zinc</keyword>
<comment type="function">
    <text evidence="1">Catalyzes the attachment of isoleucine to tRNA(Ile). As IleRS can inadvertently accommodate and process structurally similar amino acids such as valine, to avoid such errors it has two additional distinct tRNA(Ile)-dependent editing activities. One activity is designated as 'pretransfer' editing and involves the hydrolysis of activated Val-AMP. The other activity is designated 'posttransfer' editing and involves deacylation of mischarged Val-tRNA(Ile).</text>
</comment>
<comment type="catalytic activity">
    <reaction evidence="1">
        <text>tRNA(Ile) + L-isoleucine + ATP = L-isoleucyl-tRNA(Ile) + AMP + diphosphate</text>
        <dbReference type="Rhea" id="RHEA:11060"/>
        <dbReference type="Rhea" id="RHEA-COMP:9666"/>
        <dbReference type="Rhea" id="RHEA-COMP:9695"/>
        <dbReference type="ChEBI" id="CHEBI:30616"/>
        <dbReference type="ChEBI" id="CHEBI:33019"/>
        <dbReference type="ChEBI" id="CHEBI:58045"/>
        <dbReference type="ChEBI" id="CHEBI:78442"/>
        <dbReference type="ChEBI" id="CHEBI:78528"/>
        <dbReference type="ChEBI" id="CHEBI:456215"/>
        <dbReference type="EC" id="6.1.1.5"/>
    </reaction>
</comment>
<comment type="cofactor">
    <cofactor evidence="1">
        <name>Zn(2+)</name>
        <dbReference type="ChEBI" id="CHEBI:29105"/>
    </cofactor>
    <text evidence="1">Binds 1 zinc ion per subunit.</text>
</comment>
<comment type="subunit">
    <text evidence="1">Monomer.</text>
</comment>
<comment type="subcellular location">
    <subcellularLocation>
        <location evidence="1">Cytoplasm</location>
    </subcellularLocation>
</comment>
<comment type="domain">
    <text evidence="1">IleRS has two distinct active sites: one for aminoacylation and one for editing. The misactivated valine is translocated from the active site to the editing site, which sterically excludes the correctly activated isoleucine. The single editing site contains two valyl binding pockets, one specific for each substrate (Val-AMP or Val-tRNA(Ile)).</text>
</comment>
<comment type="similarity">
    <text evidence="1">Belongs to the class-I aminoacyl-tRNA synthetase family. IleS type 1 subfamily.</text>
</comment>
<reference key="1">
    <citation type="journal article" date="2007" name="PLoS Genet.">
        <title>Patterns and implications of gene gain and loss in the evolution of Prochlorococcus.</title>
        <authorList>
            <person name="Kettler G.C."/>
            <person name="Martiny A.C."/>
            <person name="Huang K."/>
            <person name="Zucker J."/>
            <person name="Coleman M.L."/>
            <person name="Rodrigue S."/>
            <person name="Chen F."/>
            <person name="Lapidus A."/>
            <person name="Ferriera S."/>
            <person name="Johnson J."/>
            <person name="Steglich C."/>
            <person name="Church G.M."/>
            <person name="Richardson P."/>
            <person name="Chisholm S.W."/>
        </authorList>
    </citation>
    <scope>NUCLEOTIDE SEQUENCE [LARGE SCALE GENOMIC DNA]</scope>
    <source>
        <strain>MIT 9301</strain>
    </source>
</reference>
<organism>
    <name type="scientific">Prochlorococcus marinus (strain MIT 9301)</name>
    <dbReference type="NCBI Taxonomy" id="167546"/>
    <lineage>
        <taxon>Bacteria</taxon>
        <taxon>Bacillati</taxon>
        <taxon>Cyanobacteriota</taxon>
        <taxon>Cyanophyceae</taxon>
        <taxon>Synechococcales</taxon>
        <taxon>Prochlorococcaceae</taxon>
        <taxon>Prochlorococcus</taxon>
    </lineage>
</organism>
<dbReference type="EC" id="6.1.1.5" evidence="1"/>
<dbReference type="EMBL" id="CP000576">
    <property type="protein sequence ID" value="ABO16883.1"/>
    <property type="molecule type" value="Genomic_DNA"/>
</dbReference>
<dbReference type="RefSeq" id="WP_011862281.1">
    <property type="nucleotide sequence ID" value="NC_009091.1"/>
</dbReference>
<dbReference type="SMR" id="A3PAV8"/>
<dbReference type="STRING" id="167546.P9301_02601"/>
<dbReference type="KEGG" id="pmg:P9301_02601"/>
<dbReference type="eggNOG" id="COG0060">
    <property type="taxonomic scope" value="Bacteria"/>
</dbReference>
<dbReference type="HOGENOM" id="CLU_001493_7_0_3"/>
<dbReference type="OrthoDB" id="9810365at2"/>
<dbReference type="Proteomes" id="UP000001430">
    <property type="component" value="Chromosome"/>
</dbReference>
<dbReference type="GO" id="GO:0005737">
    <property type="term" value="C:cytoplasm"/>
    <property type="evidence" value="ECO:0007669"/>
    <property type="project" value="UniProtKB-SubCell"/>
</dbReference>
<dbReference type="GO" id="GO:0002161">
    <property type="term" value="F:aminoacyl-tRNA deacylase activity"/>
    <property type="evidence" value="ECO:0007669"/>
    <property type="project" value="InterPro"/>
</dbReference>
<dbReference type="GO" id="GO:0005524">
    <property type="term" value="F:ATP binding"/>
    <property type="evidence" value="ECO:0007669"/>
    <property type="project" value="UniProtKB-UniRule"/>
</dbReference>
<dbReference type="GO" id="GO:0004822">
    <property type="term" value="F:isoleucine-tRNA ligase activity"/>
    <property type="evidence" value="ECO:0007669"/>
    <property type="project" value="UniProtKB-UniRule"/>
</dbReference>
<dbReference type="GO" id="GO:0000049">
    <property type="term" value="F:tRNA binding"/>
    <property type="evidence" value="ECO:0007669"/>
    <property type="project" value="InterPro"/>
</dbReference>
<dbReference type="GO" id="GO:0008270">
    <property type="term" value="F:zinc ion binding"/>
    <property type="evidence" value="ECO:0007669"/>
    <property type="project" value="UniProtKB-UniRule"/>
</dbReference>
<dbReference type="GO" id="GO:0006428">
    <property type="term" value="P:isoleucyl-tRNA aminoacylation"/>
    <property type="evidence" value="ECO:0007669"/>
    <property type="project" value="UniProtKB-UniRule"/>
</dbReference>
<dbReference type="CDD" id="cd07960">
    <property type="entry name" value="Anticodon_Ia_Ile_BEm"/>
    <property type="match status" value="1"/>
</dbReference>
<dbReference type="CDD" id="cd00818">
    <property type="entry name" value="IleRS_core"/>
    <property type="match status" value="1"/>
</dbReference>
<dbReference type="FunFam" id="3.40.50.620:FF:000152">
    <property type="entry name" value="Isoleucine--tRNA ligase"/>
    <property type="match status" value="1"/>
</dbReference>
<dbReference type="Gene3D" id="1.10.730.20">
    <property type="match status" value="1"/>
</dbReference>
<dbReference type="Gene3D" id="3.40.50.620">
    <property type="entry name" value="HUPs"/>
    <property type="match status" value="2"/>
</dbReference>
<dbReference type="Gene3D" id="1.10.10.830">
    <property type="entry name" value="Ile-tRNA synthetase CP2 domain-like"/>
    <property type="match status" value="1"/>
</dbReference>
<dbReference type="Gene3D" id="3.90.740.10">
    <property type="entry name" value="Valyl/Leucyl/Isoleucyl-tRNA synthetase, editing domain"/>
    <property type="match status" value="1"/>
</dbReference>
<dbReference type="HAMAP" id="MF_02002">
    <property type="entry name" value="Ile_tRNA_synth_type1"/>
    <property type="match status" value="1"/>
</dbReference>
<dbReference type="InterPro" id="IPR001412">
    <property type="entry name" value="aa-tRNA-synth_I_CS"/>
</dbReference>
<dbReference type="InterPro" id="IPR002300">
    <property type="entry name" value="aa-tRNA-synth_Ia"/>
</dbReference>
<dbReference type="InterPro" id="IPR033708">
    <property type="entry name" value="Anticodon_Ile_BEm"/>
</dbReference>
<dbReference type="InterPro" id="IPR002301">
    <property type="entry name" value="Ile-tRNA-ligase"/>
</dbReference>
<dbReference type="InterPro" id="IPR023585">
    <property type="entry name" value="Ile-tRNA-ligase_type1"/>
</dbReference>
<dbReference type="InterPro" id="IPR050081">
    <property type="entry name" value="Ile-tRNA_ligase"/>
</dbReference>
<dbReference type="InterPro" id="IPR013155">
    <property type="entry name" value="M/V/L/I-tRNA-synth_anticd-bd"/>
</dbReference>
<dbReference type="InterPro" id="IPR014729">
    <property type="entry name" value="Rossmann-like_a/b/a_fold"/>
</dbReference>
<dbReference type="InterPro" id="IPR009080">
    <property type="entry name" value="tRNAsynth_Ia_anticodon-bd"/>
</dbReference>
<dbReference type="InterPro" id="IPR009008">
    <property type="entry name" value="Val/Leu/Ile-tRNA-synth_edit"/>
</dbReference>
<dbReference type="InterPro" id="IPR010663">
    <property type="entry name" value="Znf_FPG/IleRS"/>
</dbReference>
<dbReference type="NCBIfam" id="TIGR00392">
    <property type="entry name" value="ileS"/>
    <property type="match status" value="1"/>
</dbReference>
<dbReference type="PANTHER" id="PTHR42765:SF1">
    <property type="entry name" value="ISOLEUCINE--TRNA LIGASE, MITOCHONDRIAL"/>
    <property type="match status" value="1"/>
</dbReference>
<dbReference type="PANTHER" id="PTHR42765">
    <property type="entry name" value="SOLEUCYL-TRNA SYNTHETASE"/>
    <property type="match status" value="1"/>
</dbReference>
<dbReference type="Pfam" id="PF08264">
    <property type="entry name" value="Anticodon_1"/>
    <property type="match status" value="1"/>
</dbReference>
<dbReference type="Pfam" id="PF00133">
    <property type="entry name" value="tRNA-synt_1"/>
    <property type="match status" value="1"/>
</dbReference>
<dbReference type="Pfam" id="PF06827">
    <property type="entry name" value="zf-FPG_IleRS"/>
    <property type="match status" value="1"/>
</dbReference>
<dbReference type="PRINTS" id="PR00984">
    <property type="entry name" value="TRNASYNTHILE"/>
</dbReference>
<dbReference type="SUPFAM" id="SSF47323">
    <property type="entry name" value="Anticodon-binding domain of a subclass of class I aminoacyl-tRNA synthetases"/>
    <property type="match status" value="1"/>
</dbReference>
<dbReference type="SUPFAM" id="SSF52374">
    <property type="entry name" value="Nucleotidylyl transferase"/>
    <property type="match status" value="1"/>
</dbReference>
<dbReference type="SUPFAM" id="SSF50677">
    <property type="entry name" value="ValRS/IleRS/LeuRS editing domain"/>
    <property type="match status" value="1"/>
</dbReference>
<dbReference type="PROSITE" id="PS00178">
    <property type="entry name" value="AA_TRNA_LIGASE_I"/>
    <property type="match status" value="1"/>
</dbReference>
<proteinExistence type="inferred from homology"/>
<gene>
    <name evidence="1" type="primary">ileS</name>
    <name type="ordered locus">P9301_02601</name>
</gene>